<organism>
    <name type="scientific">Citrobacter koseri (strain ATCC BAA-895 / CDC 4225-83 / SGSC4696)</name>
    <dbReference type="NCBI Taxonomy" id="290338"/>
    <lineage>
        <taxon>Bacteria</taxon>
        <taxon>Pseudomonadati</taxon>
        <taxon>Pseudomonadota</taxon>
        <taxon>Gammaproteobacteria</taxon>
        <taxon>Enterobacterales</taxon>
        <taxon>Enterobacteriaceae</taxon>
        <taxon>Citrobacter</taxon>
    </lineage>
</organism>
<protein>
    <recommendedName>
        <fullName evidence="1">N-acetylneuraminate lyase</fullName>
        <shortName evidence="1">NAL</shortName>
        <shortName evidence="1">Neu5Ac lyase</shortName>
        <ecNumber evidence="1">4.1.3.3</ecNumber>
    </recommendedName>
    <alternativeName>
        <fullName evidence="1">N-acetylneuraminate pyruvate-lyase</fullName>
    </alternativeName>
    <alternativeName>
        <fullName evidence="1">N-acetylneuraminic acid aldolase</fullName>
    </alternativeName>
    <alternativeName>
        <fullName evidence="1">Sialate lyase</fullName>
    </alternativeName>
    <alternativeName>
        <fullName evidence="1">Sialic acid aldolase</fullName>
    </alternativeName>
    <alternativeName>
        <fullName evidence="1">Sialic acid lyase</fullName>
    </alternativeName>
</protein>
<proteinExistence type="inferred from homology"/>
<gene>
    <name evidence="1" type="primary">nanA</name>
    <name type="ordered locus">CKO_04629</name>
</gene>
<name>NANA_CITK8</name>
<sequence>MAKDLRGVMPALLTPFDNQQKLDIESLRRLVRFNIAQGIDGLYVGGSTGEAFVQSRAEREQVLEIVAEEAKGKVTLIAHVGTVSTEESQQLASAAHRYGFDAVSAVTPFYYPFSFEEHCDHYRAIIDSAEGLPMVVYNIPALSGVKLTLDQINTLVTLPGVGALKQTSGDLYQMEQIRRAHPDLVLYNGYDEIFASGLLAGADGGIGSTYNIMGWRYQGIVKALQEGDVAKAQHLQTECNKVIDLLIKTGVFRGLKTVLHYMDVVSVPLCRKPFSPVDEKYLPELKALAQQLMQERG</sequence>
<dbReference type="EC" id="4.1.3.3" evidence="1"/>
<dbReference type="EMBL" id="CP000822">
    <property type="protein sequence ID" value="ABV15679.1"/>
    <property type="molecule type" value="Genomic_DNA"/>
</dbReference>
<dbReference type="RefSeq" id="WP_012135358.1">
    <property type="nucleotide sequence ID" value="NC_009792.1"/>
</dbReference>
<dbReference type="SMR" id="A8AQB6"/>
<dbReference type="STRING" id="290338.CKO_04629"/>
<dbReference type="GeneID" id="45138162"/>
<dbReference type="KEGG" id="cko:CKO_04629"/>
<dbReference type="HOGENOM" id="CLU_049343_6_0_6"/>
<dbReference type="OrthoDB" id="199953at2"/>
<dbReference type="UniPathway" id="UPA00629">
    <property type="reaction ID" value="UER00680"/>
</dbReference>
<dbReference type="Proteomes" id="UP000008148">
    <property type="component" value="Chromosome"/>
</dbReference>
<dbReference type="GO" id="GO:0005829">
    <property type="term" value="C:cytosol"/>
    <property type="evidence" value="ECO:0007669"/>
    <property type="project" value="TreeGrafter"/>
</dbReference>
<dbReference type="GO" id="GO:0008747">
    <property type="term" value="F:N-acetylneuraminate lyase activity"/>
    <property type="evidence" value="ECO:0007669"/>
    <property type="project" value="UniProtKB-UniRule"/>
</dbReference>
<dbReference type="GO" id="GO:0005975">
    <property type="term" value="P:carbohydrate metabolic process"/>
    <property type="evidence" value="ECO:0007669"/>
    <property type="project" value="UniProtKB-UniRule"/>
</dbReference>
<dbReference type="GO" id="GO:0019262">
    <property type="term" value="P:N-acetylneuraminate catabolic process"/>
    <property type="evidence" value="ECO:0007669"/>
    <property type="project" value="UniProtKB-UniRule"/>
</dbReference>
<dbReference type="CDD" id="cd00954">
    <property type="entry name" value="NAL"/>
    <property type="match status" value="1"/>
</dbReference>
<dbReference type="FunFam" id="3.20.20.70:FF:000039">
    <property type="entry name" value="N-acetylneuraminate lyase"/>
    <property type="match status" value="1"/>
</dbReference>
<dbReference type="Gene3D" id="3.20.20.70">
    <property type="entry name" value="Aldolase class I"/>
    <property type="match status" value="1"/>
</dbReference>
<dbReference type="HAMAP" id="MF_01237">
    <property type="entry name" value="N_acetylneuram_lyase"/>
    <property type="match status" value="1"/>
</dbReference>
<dbReference type="InterPro" id="IPR013785">
    <property type="entry name" value="Aldolase_TIM"/>
</dbReference>
<dbReference type="InterPro" id="IPR002220">
    <property type="entry name" value="DapA-like"/>
</dbReference>
<dbReference type="InterPro" id="IPR005264">
    <property type="entry name" value="NanA"/>
</dbReference>
<dbReference type="InterPro" id="IPR020625">
    <property type="entry name" value="Schiff_base-form_aldolases_AS"/>
</dbReference>
<dbReference type="InterPro" id="IPR020624">
    <property type="entry name" value="Schiff_base-form_aldolases_CS"/>
</dbReference>
<dbReference type="NCBIfam" id="TIGR00683">
    <property type="entry name" value="nanA"/>
    <property type="match status" value="1"/>
</dbReference>
<dbReference type="NCBIfam" id="NF003164">
    <property type="entry name" value="PRK04147.1"/>
    <property type="match status" value="1"/>
</dbReference>
<dbReference type="PANTHER" id="PTHR42849">
    <property type="entry name" value="N-ACETYLNEURAMINATE LYASE"/>
    <property type="match status" value="1"/>
</dbReference>
<dbReference type="PANTHER" id="PTHR42849:SF1">
    <property type="entry name" value="N-ACETYLNEURAMINATE LYASE"/>
    <property type="match status" value="1"/>
</dbReference>
<dbReference type="Pfam" id="PF00701">
    <property type="entry name" value="DHDPS"/>
    <property type="match status" value="1"/>
</dbReference>
<dbReference type="PIRSF" id="PIRSF001365">
    <property type="entry name" value="DHDPS"/>
    <property type="match status" value="1"/>
</dbReference>
<dbReference type="PRINTS" id="PR00146">
    <property type="entry name" value="DHPICSNTHASE"/>
</dbReference>
<dbReference type="SMART" id="SM01130">
    <property type="entry name" value="DHDPS"/>
    <property type="match status" value="1"/>
</dbReference>
<dbReference type="SUPFAM" id="SSF51569">
    <property type="entry name" value="Aldolase"/>
    <property type="match status" value="1"/>
</dbReference>
<dbReference type="PROSITE" id="PS00665">
    <property type="entry name" value="DHDPS_1"/>
    <property type="match status" value="1"/>
</dbReference>
<dbReference type="PROSITE" id="PS00666">
    <property type="entry name" value="DHDPS_2"/>
    <property type="match status" value="1"/>
</dbReference>
<evidence type="ECO:0000255" key="1">
    <source>
        <dbReference type="HAMAP-Rule" id="MF_01237"/>
    </source>
</evidence>
<comment type="function">
    <text evidence="1">Catalyzes the reversible aldol cleavage of N-acetylneuraminic acid (sialic acid; Neu5Ac) to form pyruvate and N-acetylmannosamine (ManNAc) via a Schiff base intermediate.</text>
</comment>
<comment type="catalytic activity">
    <reaction evidence="1">
        <text>aceneuramate = aldehydo-N-acetyl-D-mannosamine + pyruvate</text>
        <dbReference type="Rhea" id="RHEA:23296"/>
        <dbReference type="ChEBI" id="CHEBI:15361"/>
        <dbReference type="ChEBI" id="CHEBI:17122"/>
        <dbReference type="ChEBI" id="CHEBI:173083"/>
        <dbReference type="EC" id="4.1.3.3"/>
    </reaction>
</comment>
<comment type="pathway">
    <text evidence="1">Amino-sugar metabolism; N-acetylneuraminate degradation; D-fructose 6-phosphate from N-acetylneuraminate: step 1/5.</text>
</comment>
<comment type="subunit">
    <text evidence="1">Homotetramer.</text>
</comment>
<comment type="subcellular location">
    <subcellularLocation>
        <location evidence="1">Cytoplasm</location>
    </subcellularLocation>
</comment>
<comment type="similarity">
    <text evidence="1">Belongs to the DapA family. NanA subfamily.</text>
</comment>
<accession>A8AQB6</accession>
<keyword id="KW-0119">Carbohydrate metabolism</keyword>
<keyword id="KW-0963">Cytoplasm</keyword>
<keyword id="KW-0456">Lyase</keyword>
<keyword id="KW-1185">Reference proteome</keyword>
<keyword id="KW-0704">Schiff base</keyword>
<feature type="chain" id="PRO_1000066920" description="N-acetylneuraminate lyase">
    <location>
        <begin position="1"/>
        <end position="297"/>
    </location>
</feature>
<feature type="active site" description="Proton donor" evidence="1">
    <location>
        <position position="137"/>
    </location>
</feature>
<feature type="active site" description="Schiff-base intermediate with substrate" evidence="1">
    <location>
        <position position="165"/>
    </location>
</feature>
<feature type="binding site" evidence="1">
    <location>
        <position position="47"/>
    </location>
    <ligand>
        <name>aceneuramate</name>
        <dbReference type="ChEBI" id="CHEBI:173083"/>
    </ligand>
</feature>
<feature type="binding site" evidence="1">
    <location>
        <position position="48"/>
    </location>
    <ligand>
        <name>aceneuramate</name>
        <dbReference type="ChEBI" id="CHEBI:173083"/>
    </ligand>
</feature>
<feature type="binding site" evidence="1">
    <location>
        <position position="167"/>
    </location>
    <ligand>
        <name>aceneuramate</name>
        <dbReference type="ChEBI" id="CHEBI:173083"/>
    </ligand>
</feature>
<feature type="binding site" evidence="1">
    <location>
        <position position="189"/>
    </location>
    <ligand>
        <name>aceneuramate</name>
        <dbReference type="ChEBI" id="CHEBI:173083"/>
    </ligand>
</feature>
<feature type="binding site" evidence="1">
    <location>
        <position position="191"/>
    </location>
    <ligand>
        <name>aceneuramate</name>
        <dbReference type="ChEBI" id="CHEBI:173083"/>
    </ligand>
</feature>
<feature type="binding site" evidence="1">
    <location>
        <position position="192"/>
    </location>
    <ligand>
        <name>aceneuramate</name>
        <dbReference type="ChEBI" id="CHEBI:173083"/>
    </ligand>
</feature>
<feature type="binding site" evidence="1">
    <location>
        <position position="208"/>
    </location>
    <ligand>
        <name>aceneuramate</name>
        <dbReference type="ChEBI" id="CHEBI:173083"/>
    </ligand>
</feature>
<reference key="1">
    <citation type="submission" date="2007-08" db="EMBL/GenBank/DDBJ databases">
        <authorList>
            <consortium name="The Citrobacter koseri Genome Sequencing Project"/>
            <person name="McClelland M."/>
            <person name="Sanderson E.K."/>
            <person name="Porwollik S."/>
            <person name="Spieth J."/>
            <person name="Clifton W.S."/>
            <person name="Latreille P."/>
            <person name="Courtney L."/>
            <person name="Wang C."/>
            <person name="Pepin K."/>
            <person name="Bhonagiri V."/>
            <person name="Nash W."/>
            <person name="Johnson M."/>
            <person name="Thiruvilangam P."/>
            <person name="Wilson R."/>
        </authorList>
    </citation>
    <scope>NUCLEOTIDE SEQUENCE [LARGE SCALE GENOMIC DNA]</scope>
    <source>
        <strain>ATCC BAA-895 / CDC 4225-83 / SGSC4696</strain>
    </source>
</reference>